<organism>
    <name type="scientific">Shewanella baltica (strain OS185)</name>
    <dbReference type="NCBI Taxonomy" id="402882"/>
    <lineage>
        <taxon>Bacteria</taxon>
        <taxon>Pseudomonadati</taxon>
        <taxon>Pseudomonadota</taxon>
        <taxon>Gammaproteobacteria</taxon>
        <taxon>Alteromonadales</taxon>
        <taxon>Shewanellaceae</taxon>
        <taxon>Shewanella</taxon>
    </lineage>
</organism>
<name>UVRC_SHEB8</name>
<proteinExistence type="inferred from homology"/>
<evidence type="ECO:0000255" key="1">
    <source>
        <dbReference type="HAMAP-Rule" id="MF_00203"/>
    </source>
</evidence>
<dbReference type="EMBL" id="CP000753">
    <property type="protein sequence ID" value="ABS08734.1"/>
    <property type="molecule type" value="Genomic_DNA"/>
</dbReference>
<dbReference type="RefSeq" id="WP_012089483.1">
    <property type="nucleotide sequence ID" value="NC_009665.1"/>
</dbReference>
<dbReference type="SMR" id="A6WPJ5"/>
<dbReference type="KEGG" id="sbm:Shew185_2599"/>
<dbReference type="HOGENOM" id="CLU_014841_3_0_6"/>
<dbReference type="GO" id="GO:0005737">
    <property type="term" value="C:cytoplasm"/>
    <property type="evidence" value="ECO:0007669"/>
    <property type="project" value="UniProtKB-SubCell"/>
</dbReference>
<dbReference type="GO" id="GO:0009380">
    <property type="term" value="C:excinuclease repair complex"/>
    <property type="evidence" value="ECO:0007669"/>
    <property type="project" value="InterPro"/>
</dbReference>
<dbReference type="GO" id="GO:0003677">
    <property type="term" value="F:DNA binding"/>
    <property type="evidence" value="ECO:0007669"/>
    <property type="project" value="UniProtKB-UniRule"/>
</dbReference>
<dbReference type="GO" id="GO:0009381">
    <property type="term" value="F:excinuclease ABC activity"/>
    <property type="evidence" value="ECO:0007669"/>
    <property type="project" value="UniProtKB-UniRule"/>
</dbReference>
<dbReference type="GO" id="GO:0006289">
    <property type="term" value="P:nucleotide-excision repair"/>
    <property type="evidence" value="ECO:0007669"/>
    <property type="project" value="UniProtKB-UniRule"/>
</dbReference>
<dbReference type="GO" id="GO:0009432">
    <property type="term" value="P:SOS response"/>
    <property type="evidence" value="ECO:0007669"/>
    <property type="project" value="UniProtKB-UniRule"/>
</dbReference>
<dbReference type="CDD" id="cd10434">
    <property type="entry name" value="GIY-YIG_UvrC_Cho"/>
    <property type="match status" value="1"/>
</dbReference>
<dbReference type="FunFam" id="1.10.150.20:FF:000005">
    <property type="entry name" value="UvrABC system protein C"/>
    <property type="match status" value="1"/>
</dbReference>
<dbReference type="FunFam" id="3.30.420.340:FF:000001">
    <property type="entry name" value="UvrABC system protein C"/>
    <property type="match status" value="1"/>
</dbReference>
<dbReference type="FunFam" id="3.40.1440.10:FF:000001">
    <property type="entry name" value="UvrABC system protein C"/>
    <property type="match status" value="1"/>
</dbReference>
<dbReference type="Gene3D" id="1.10.150.20">
    <property type="entry name" value="5' to 3' exonuclease, C-terminal subdomain"/>
    <property type="match status" value="1"/>
</dbReference>
<dbReference type="Gene3D" id="3.40.1440.10">
    <property type="entry name" value="GIY-YIG endonuclease"/>
    <property type="match status" value="1"/>
</dbReference>
<dbReference type="Gene3D" id="4.10.860.10">
    <property type="entry name" value="UVR domain"/>
    <property type="match status" value="1"/>
</dbReference>
<dbReference type="Gene3D" id="3.30.420.340">
    <property type="entry name" value="UvrC, RNAse H endonuclease domain"/>
    <property type="match status" value="1"/>
</dbReference>
<dbReference type="HAMAP" id="MF_00203">
    <property type="entry name" value="UvrC"/>
    <property type="match status" value="1"/>
</dbReference>
<dbReference type="InterPro" id="IPR000305">
    <property type="entry name" value="GIY-YIG_endonuc"/>
</dbReference>
<dbReference type="InterPro" id="IPR035901">
    <property type="entry name" value="GIY-YIG_endonuc_sf"/>
</dbReference>
<dbReference type="InterPro" id="IPR047296">
    <property type="entry name" value="GIY-YIG_UvrC_Cho"/>
</dbReference>
<dbReference type="InterPro" id="IPR003583">
    <property type="entry name" value="Hlx-hairpin-Hlx_DNA-bd_motif"/>
</dbReference>
<dbReference type="InterPro" id="IPR010994">
    <property type="entry name" value="RuvA_2-like"/>
</dbReference>
<dbReference type="InterPro" id="IPR001943">
    <property type="entry name" value="UVR_dom"/>
</dbReference>
<dbReference type="InterPro" id="IPR036876">
    <property type="entry name" value="UVR_dom_sf"/>
</dbReference>
<dbReference type="InterPro" id="IPR050066">
    <property type="entry name" value="UvrABC_protein_C"/>
</dbReference>
<dbReference type="InterPro" id="IPR004791">
    <property type="entry name" value="UvrC"/>
</dbReference>
<dbReference type="InterPro" id="IPR001162">
    <property type="entry name" value="UvrC_RNase_H_dom"/>
</dbReference>
<dbReference type="InterPro" id="IPR038476">
    <property type="entry name" value="UvrC_RNase_H_dom_sf"/>
</dbReference>
<dbReference type="NCBIfam" id="NF001824">
    <property type="entry name" value="PRK00558.1-5"/>
    <property type="match status" value="1"/>
</dbReference>
<dbReference type="NCBIfam" id="TIGR00194">
    <property type="entry name" value="uvrC"/>
    <property type="match status" value="1"/>
</dbReference>
<dbReference type="PANTHER" id="PTHR30562:SF1">
    <property type="entry name" value="UVRABC SYSTEM PROTEIN C"/>
    <property type="match status" value="1"/>
</dbReference>
<dbReference type="PANTHER" id="PTHR30562">
    <property type="entry name" value="UVRC/OXIDOREDUCTASE"/>
    <property type="match status" value="1"/>
</dbReference>
<dbReference type="Pfam" id="PF01541">
    <property type="entry name" value="GIY-YIG"/>
    <property type="match status" value="1"/>
</dbReference>
<dbReference type="Pfam" id="PF14520">
    <property type="entry name" value="HHH_5"/>
    <property type="match status" value="1"/>
</dbReference>
<dbReference type="Pfam" id="PF02151">
    <property type="entry name" value="UVR"/>
    <property type="match status" value="1"/>
</dbReference>
<dbReference type="Pfam" id="PF22920">
    <property type="entry name" value="UvrC_RNaseH"/>
    <property type="match status" value="1"/>
</dbReference>
<dbReference type="Pfam" id="PF08459">
    <property type="entry name" value="UvrC_RNaseH_dom"/>
    <property type="match status" value="1"/>
</dbReference>
<dbReference type="SMART" id="SM00465">
    <property type="entry name" value="GIYc"/>
    <property type="match status" value="1"/>
</dbReference>
<dbReference type="SMART" id="SM00278">
    <property type="entry name" value="HhH1"/>
    <property type="match status" value="2"/>
</dbReference>
<dbReference type="SUPFAM" id="SSF46600">
    <property type="entry name" value="C-terminal UvrC-binding domain of UvrB"/>
    <property type="match status" value="1"/>
</dbReference>
<dbReference type="SUPFAM" id="SSF82771">
    <property type="entry name" value="GIY-YIG endonuclease"/>
    <property type="match status" value="1"/>
</dbReference>
<dbReference type="SUPFAM" id="SSF47781">
    <property type="entry name" value="RuvA domain 2-like"/>
    <property type="match status" value="1"/>
</dbReference>
<dbReference type="PROSITE" id="PS50164">
    <property type="entry name" value="GIY_YIG"/>
    <property type="match status" value="1"/>
</dbReference>
<dbReference type="PROSITE" id="PS50151">
    <property type="entry name" value="UVR"/>
    <property type="match status" value="1"/>
</dbReference>
<dbReference type="PROSITE" id="PS50165">
    <property type="entry name" value="UVRC"/>
    <property type="match status" value="1"/>
</dbReference>
<protein>
    <recommendedName>
        <fullName evidence="1">UvrABC system protein C</fullName>
        <shortName evidence="1">Protein UvrC</shortName>
    </recommendedName>
    <alternativeName>
        <fullName evidence="1">Excinuclease ABC subunit C</fullName>
    </alternativeName>
</protein>
<sequence length="609" mass="68875">MSNEFNAQSFLRTVSSSAGVYRMYDVKNDVIYVGKAKDLKKRLTSYFRKNLANVKTQALVSHIHHIDVTLTHSETDALLLENDYIKQYMPKYNVLLRDDKSYPYILLSQHEHPRLAYHRGPQREKGHYFGPYPNGGAVRESLHLMQKLFPIRQCDDLYYKSRSRPCLQYQLSRCSAPCVGKVSNADYDEQVKLASLFLKGKDQQVISALVDKMELAAERQAYEQAARFRDQIMALRKVAEQQEVSNNKGDMDVIGVHYSSGIACFHLLFIREGKIFGSRSYYPSVPAQTDMDEVLRSFILQFYLNADIQRTIPKEVVISHNFEELHELEAAVSEALDKKFSIKTNVRADRASFLRLAVTNATNAVVTRLSHKNTVEQRFVLLEEILELSTPIQRMECFDISHTMGESTVASCVVFNREGPHKGEYRRYNIEGITPGDDYAAMKQAVSRRFDKIEAGGKIPDILFIDGGLGQLRIAQKIVDEKFVHLDKAPQLIGVAKGEGRKPGLETLILGDTETSFSLEGDSPALHLIQHIRDESHRFAITGHRNRRQKTRNTSTLESIPGIGPKRRKALLQHLGGLQEVKGASVAELVKVPGISIEMAQTIHDALRG</sequence>
<comment type="function">
    <text evidence="1">The UvrABC repair system catalyzes the recognition and processing of DNA lesions. UvrC both incises the 5' and 3' sides of the lesion. The N-terminal half is responsible for the 3' incision and the C-terminal half is responsible for the 5' incision.</text>
</comment>
<comment type="subunit">
    <text evidence="1">Interacts with UvrB in an incision complex.</text>
</comment>
<comment type="subcellular location">
    <subcellularLocation>
        <location evidence="1">Cytoplasm</location>
    </subcellularLocation>
</comment>
<comment type="similarity">
    <text evidence="1">Belongs to the UvrC family.</text>
</comment>
<accession>A6WPJ5</accession>
<feature type="chain" id="PRO_1000077835" description="UvrABC system protein C">
    <location>
        <begin position="1"/>
        <end position="609"/>
    </location>
</feature>
<feature type="domain" description="GIY-YIG" evidence="1">
    <location>
        <begin position="16"/>
        <end position="94"/>
    </location>
</feature>
<feature type="domain" description="UVR" evidence="1">
    <location>
        <begin position="203"/>
        <end position="238"/>
    </location>
</feature>
<gene>
    <name evidence="1" type="primary">uvrC</name>
    <name type="ordered locus">Shew185_2599</name>
</gene>
<reference key="1">
    <citation type="submission" date="2007-07" db="EMBL/GenBank/DDBJ databases">
        <title>Complete sequence of chromosome of Shewanella baltica OS185.</title>
        <authorList>
            <consortium name="US DOE Joint Genome Institute"/>
            <person name="Copeland A."/>
            <person name="Lucas S."/>
            <person name="Lapidus A."/>
            <person name="Barry K."/>
            <person name="Glavina del Rio T."/>
            <person name="Dalin E."/>
            <person name="Tice H."/>
            <person name="Pitluck S."/>
            <person name="Sims D."/>
            <person name="Brettin T."/>
            <person name="Bruce D."/>
            <person name="Detter J.C."/>
            <person name="Han C."/>
            <person name="Schmutz J."/>
            <person name="Larimer F."/>
            <person name="Land M."/>
            <person name="Hauser L."/>
            <person name="Kyrpides N."/>
            <person name="Mikhailova N."/>
            <person name="Brettar I."/>
            <person name="Rodrigues J."/>
            <person name="Konstantinidis K."/>
            <person name="Tiedje J."/>
            <person name="Richardson P."/>
        </authorList>
    </citation>
    <scope>NUCLEOTIDE SEQUENCE [LARGE SCALE GENOMIC DNA]</scope>
    <source>
        <strain>OS185</strain>
    </source>
</reference>
<keyword id="KW-0963">Cytoplasm</keyword>
<keyword id="KW-0227">DNA damage</keyword>
<keyword id="KW-0228">DNA excision</keyword>
<keyword id="KW-0234">DNA repair</keyword>
<keyword id="KW-0267">Excision nuclease</keyword>
<keyword id="KW-0742">SOS response</keyword>